<accession>Q54DS4</accession>
<sequence length="1823" mass="203124">MTYNNNNNYLAPPLMTSTSTSTSTSTPTSTKTSPLNTSSSSNILKSNSRNPSPNNPTNIGNSSGGGGVSSNNSNNIVYSNSNNINTSTFHYNFNVKFNEIVNSIAVNRAGTLVCLGGKKSLQVVDLELLKSVRNIPQQSKWEVGVVDWNSQSPNLVASSSNQDTFIWDIENPKYPLLGQFSSHQRAISDLSWSLFDNNILATTSADSFVNIWDLRTPKKAVKFKSLKSHILGAIQVKWNRFNSNVLASAHESYLMIWDIRKDSQELNTAVHSAKVYGIDWSHRDEKEILTCSQDKTVKIWNYPSPKPKSTIITSNPILRAKYLPLGSGGIVTISDRGENHIRLWDSATSDYSTPVETFIGHTDNVRSFDFRVRSSQNDNDIQIVSWSKDQYLRLWKLDDHLKDLFNIEYIPFTPLNLPTTTTTTTTATTTTTNNSTSEMLNESTDNNNNTNSLNSSTLLSTPNLESSINSLNMELTIEQQQLDDSNTPKDLEYELKIIQSKVIDKYLKIEQVNLFKRTCVVICTIPNNYQPDDDNNNNNLNNLNNNNNTQDNIDNNDDNNNNELIDSTTVQIRFSFPSLYPSTYPNLEFIPHACTTPLKTNLLIKSTLNELCAFKSSQSKNCFEQCLIELVKLVKQYILDEKPKNTSINITETNNNNNNHNNSVQNNNNNNNNNNNNNNNSGGGFLKNVFSKSSKAVEVVKQPFINLRNSSGRIDISQQQQQQQQQQAATTSTSSSSSSSSNTQQQQQFLTATVSNKGGTVLSKSPTSPRMFEQYRPGKTNKTNEIIFLNNYKDSNEEQLPLSPILTNLNNNSNNNSGSGGGGSSNMNASITTSTTTNDQVSLSVHRNSYRIQENYPCPRLCGAVFGGCGKLIVFRNTIITNIPNNNKNSDNSNNNNSSSSNKNSDNSNNSNNNSNNTNSSSSSNNGGIANVGGGSSSTSSLIHHHLQHLHLNQPQLNLLSLSLSSSSSSISDTTNNTSNTTQNIQNTTKNINPPRTYKELLNILSTTNNTIKNNITGNNNINSNSNTTNNLTSPNPNRLNRLNEKQPYSSSPFNDNPLINDYKNNIFGTPSTSHSFLASPQPSSPISFMNHIDTLLDDSENNLMTMDNNNNNNIVNDEETQQLVTSSSPTFSKSSLNNINNTTNNSNNNSSNSNNNSNSNNNNNNNNNNNNVNNNNDNNNGNGKSLQKTMKIIDISTLSLLNVNLANSYILSGKPVEEICKYNSELAEKENRKDLVKLWNTLGMITDSKLYLKQLINQQQQQSHFGFSGSSGSTGMGGSSSTGIASSTGSNSIRRPTKLESSLHQSISMSNLGQIPSSASSSYSQTSPSLPYNQLYHQTTLQTPSSPSSQQQQIQFYQQQALQLQQQQQQQQQQQREIQFKQTQLIQQAQIEDNGWPNHALGRKLVKSLIDYYKKLEDVQTLATISCILILAANQLQKLKNGESITSIGSSSSSSSSSLASSPLTFSAGGGGGGSYSPMFNFSAISISAPMGIDDMVSKQKGHLYNYYGQQQHSHYHHGYQHHNIHQTYGSHPNDVITYDPNLCLLDPNNSKIYDYYRQQYSDLLYRWGLLEKRAEVLKYIQHKEVDKGINFSIECIKCNRKLNNFYCNNCKIYAVKCSICNISVRGLSSFCLYCGHGGHTNHIKGWFEKQTKCPTGCGCTCSFNLPFIQQQQYQQQLQQQQQQLQQQLQLQQTQQQQPQHYQQHRHSMSGTSHYHQQQPHTHNYQQHISSYAHTTYQPHTPRNNGQPVLPQQRRYSISTFDPQQEQDHEKFNHGGGSGGGDAIFHDILFSPNSSSSSSSYQQQTKNSHQYHHPSNPYMFSN</sequence>
<dbReference type="EMBL" id="AAFI02000187">
    <property type="protein sequence ID" value="EAL61384.1"/>
    <property type="molecule type" value="Genomic_DNA"/>
</dbReference>
<dbReference type="RefSeq" id="XP_629798.1">
    <property type="nucleotide sequence ID" value="XM_629796.1"/>
</dbReference>
<dbReference type="SMR" id="Q54DS4"/>
<dbReference type="FunCoup" id="Q54DS4">
    <property type="interactions" value="30"/>
</dbReference>
<dbReference type="STRING" id="44689.Q54DS4"/>
<dbReference type="PaxDb" id="44689-DDB0184193"/>
<dbReference type="EnsemblProtists" id="EAL61384">
    <property type="protein sequence ID" value="EAL61384"/>
    <property type="gene ID" value="DDB_G0292056"/>
</dbReference>
<dbReference type="GeneID" id="8628476"/>
<dbReference type="KEGG" id="ddi:DDB_G0292056"/>
<dbReference type="dictyBase" id="DDB_G0292056"/>
<dbReference type="VEuPathDB" id="AmoebaDB:DDB_G0292056"/>
<dbReference type="eggNOG" id="KOG0309">
    <property type="taxonomic scope" value="Eukaryota"/>
</dbReference>
<dbReference type="HOGENOM" id="CLU_237570_0_0_1"/>
<dbReference type="InParanoid" id="Q54DS4"/>
<dbReference type="OMA" id="YPCPRLC"/>
<dbReference type="Reactome" id="R-DDI-9639288">
    <property type="pathway name" value="Amino acids regulate mTORC1"/>
</dbReference>
<dbReference type="PRO" id="PR:Q54DS4"/>
<dbReference type="Proteomes" id="UP000002195">
    <property type="component" value="Chromosome 6"/>
</dbReference>
<dbReference type="GO" id="GO:0035859">
    <property type="term" value="C:Seh1-associated complex"/>
    <property type="evidence" value="ECO:0000318"/>
    <property type="project" value="GO_Central"/>
</dbReference>
<dbReference type="GO" id="GO:0005774">
    <property type="term" value="C:vacuolar membrane"/>
    <property type="evidence" value="ECO:0000318"/>
    <property type="project" value="GO_Central"/>
</dbReference>
<dbReference type="GO" id="GO:0035591">
    <property type="term" value="F:signaling adaptor activity"/>
    <property type="evidence" value="ECO:0000318"/>
    <property type="project" value="GO_Central"/>
</dbReference>
<dbReference type="GO" id="GO:0034198">
    <property type="term" value="P:cellular response to amino acid starvation"/>
    <property type="evidence" value="ECO:0000318"/>
    <property type="project" value="GO_Central"/>
</dbReference>
<dbReference type="GO" id="GO:1904263">
    <property type="term" value="P:positive regulation of TORC1 signaling"/>
    <property type="evidence" value="ECO:0000318"/>
    <property type="project" value="GO_Central"/>
</dbReference>
<dbReference type="CDD" id="cd16692">
    <property type="entry name" value="mRING-H2-C3H3C2_WDR59"/>
    <property type="match status" value="1"/>
</dbReference>
<dbReference type="Gene3D" id="2.130.10.10">
    <property type="entry name" value="YVTN repeat-like/Quinoprotein amine dehydrogenase"/>
    <property type="match status" value="2"/>
</dbReference>
<dbReference type="InterPro" id="IPR015943">
    <property type="entry name" value="WD40/YVTN_repeat-like_dom_sf"/>
</dbReference>
<dbReference type="InterPro" id="IPR019775">
    <property type="entry name" value="WD40_repeat_CS"/>
</dbReference>
<dbReference type="InterPro" id="IPR036322">
    <property type="entry name" value="WD40_repeat_dom_sf"/>
</dbReference>
<dbReference type="InterPro" id="IPR001680">
    <property type="entry name" value="WD40_rpt"/>
</dbReference>
<dbReference type="InterPro" id="IPR049567">
    <property type="entry name" value="WDR59-like"/>
</dbReference>
<dbReference type="InterPro" id="IPR039456">
    <property type="entry name" value="WDR59_mRING-H2-C3H3C2"/>
</dbReference>
<dbReference type="InterPro" id="IPR049566">
    <property type="entry name" value="WDR59_RTC1-like_RING_Znf"/>
</dbReference>
<dbReference type="PANTHER" id="PTHR46170">
    <property type="entry name" value="GATOR COMPLEX PROTEIN WDR59"/>
    <property type="match status" value="1"/>
</dbReference>
<dbReference type="PANTHER" id="PTHR46170:SF1">
    <property type="entry name" value="GATOR COMPLEX PROTEIN WDR59"/>
    <property type="match status" value="1"/>
</dbReference>
<dbReference type="Pfam" id="PF00400">
    <property type="entry name" value="WD40"/>
    <property type="match status" value="2"/>
</dbReference>
<dbReference type="Pfam" id="PF17120">
    <property type="entry name" value="zf-RING_16"/>
    <property type="match status" value="1"/>
</dbReference>
<dbReference type="SMART" id="SM00320">
    <property type="entry name" value="WD40"/>
    <property type="match status" value="7"/>
</dbReference>
<dbReference type="SUPFAM" id="SSF50978">
    <property type="entry name" value="WD40 repeat-like"/>
    <property type="match status" value="1"/>
</dbReference>
<dbReference type="PROSITE" id="PS00678">
    <property type="entry name" value="WD_REPEATS_1"/>
    <property type="match status" value="2"/>
</dbReference>
<dbReference type="PROSITE" id="PS50082">
    <property type="entry name" value="WD_REPEATS_2"/>
    <property type="match status" value="2"/>
</dbReference>
<dbReference type="PROSITE" id="PS50294">
    <property type="entry name" value="WD_REPEATS_REGION"/>
    <property type="match status" value="1"/>
</dbReference>
<feature type="chain" id="PRO_0000356851" description="WD repeat-containing protein DDB_G0292056">
    <location>
        <begin position="1"/>
        <end position="1823"/>
    </location>
</feature>
<feature type="repeat" description="WD 1">
    <location>
        <begin position="138"/>
        <end position="177"/>
    </location>
</feature>
<feature type="repeat" description="WD 2">
    <location>
        <begin position="182"/>
        <end position="222"/>
    </location>
</feature>
<feature type="repeat" description="WD 3">
    <location>
        <begin position="228"/>
        <end position="267"/>
    </location>
</feature>
<feature type="repeat" description="WD 4">
    <location>
        <begin position="270"/>
        <end position="310"/>
    </location>
</feature>
<feature type="repeat" description="WD 5">
    <location>
        <begin position="312"/>
        <end position="354"/>
    </location>
</feature>
<feature type="repeat" description="WD 6">
    <location>
        <begin position="360"/>
        <end position="405"/>
    </location>
</feature>
<feature type="repeat" description="WD 7">
    <location>
        <begin position="1207"/>
        <end position="1250"/>
    </location>
</feature>
<feature type="region of interest" description="Disordered" evidence="1">
    <location>
        <begin position="1"/>
        <end position="68"/>
    </location>
</feature>
<feature type="region of interest" description="Disordered" evidence="1">
    <location>
        <begin position="418"/>
        <end position="461"/>
    </location>
</feature>
<feature type="region of interest" description="Disordered" evidence="1">
    <location>
        <begin position="530"/>
        <end position="562"/>
    </location>
</feature>
<feature type="region of interest" description="Disordered" evidence="1">
    <location>
        <begin position="649"/>
        <end position="687"/>
    </location>
</feature>
<feature type="region of interest" description="Disordered" evidence="1">
    <location>
        <begin position="714"/>
        <end position="778"/>
    </location>
</feature>
<feature type="region of interest" description="Disordered" evidence="1">
    <location>
        <begin position="805"/>
        <end position="840"/>
    </location>
</feature>
<feature type="region of interest" description="Disordered" evidence="1">
    <location>
        <begin position="883"/>
        <end position="940"/>
    </location>
</feature>
<feature type="region of interest" description="Disordered" evidence="1">
    <location>
        <begin position="966"/>
        <end position="996"/>
    </location>
</feature>
<feature type="region of interest" description="Disordered" evidence="1">
    <location>
        <begin position="1014"/>
        <end position="1058"/>
    </location>
</feature>
<feature type="region of interest" description="Disordered" evidence="1">
    <location>
        <begin position="1122"/>
        <end position="1186"/>
    </location>
</feature>
<feature type="region of interest" description="Disordered" evidence="1">
    <location>
        <begin position="1264"/>
        <end position="1307"/>
    </location>
</feature>
<feature type="region of interest" description="Disordered" evidence="1">
    <location>
        <begin position="1697"/>
        <end position="1725"/>
    </location>
</feature>
<feature type="region of interest" description="Disordered" evidence="1">
    <location>
        <begin position="1764"/>
        <end position="1823"/>
    </location>
</feature>
<feature type="compositionally biased region" description="Low complexity" evidence="1">
    <location>
        <begin position="16"/>
        <end position="61"/>
    </location>
</feature>
<feature type="compositionally biased region" description="Low complexity" evidence="1">
    <location>
        <begin position="419"/>
        <end position="432"/>
    </location>
</feature>
<feature type="compositionally biased region" description="Low complexity" evidence="1">
    <location>
        <begin position="440"/>
        <end position="461"/>
    </location>
</feature>
<feature type="compositionally biased region" description="Low complexity" evidence="1">
    <location>
        <begin position="654"/>
        <end position="680"/>
    </location>
</feature>
<feature type="compositionally biased region" description="Low complexity" evidence="1">
    <location>
        <begin position="717"/>
        <end position="748"/>
    </location>
</feature>
<feature type="compositionally biased region" description="Polar residues" evidence="1">
    <location>
        <begin position="749"/>
        <end position="768"/>
    </location>
</feature>
<feature type="compositionally biased region" description="Polar residues" evidence="1">
    <location>
        <begin position="827"/>
        <end position="840"/>
    </location>
</feature>
<feature type="compositionally biased region" description="Low complexity" evidence="1">
    <location>
        <begin position="885"/>
        <end position="926"/>
    </location>
</feature>
<feature type="compositionally biased region" description="Low complexity" evidence="1">
    <location>
        <begin position="966"/>
        <end position="993"/>
    </location>
</feature>
<feature type="compositionally biased region" description="Low complexity" evidence="1">
    <location>
        <begin position="1014"/>
        <end position="1041"/>
    </location>
</feature>
<feature type="compositionally biased region" description="Low complexity" evidence="1">
    <location>
        <begin position="1127"/>
        <end position="1183"/>
    </location>
</feature>
<feature type="compositionally biased region" description="Low complexity" evidence="1">
    <location>
        <begin position="1282"/>
        <end position="1293"/>
    </location>
</feature>
<feature type="compositionally biased region" description="Polar residues" evidence="1">
    <location>
        <begin position="1710"/>
        <end position="1725"/>
    </location>
</feature>
<keyword id="KW-1185">Reference proteome</keyword>
<keyword id="KW-0677">Repeat</keyword>
<keyword id="KW-0853">WD repeat</keyword>
<name>Y2056_DICDI</name>
<evidence type="ECO:0000256" key="1">
    <source>
        <dbReference type="SAM" id="MobiDB-lite"/>
    </source>
</evidence>
<proteinExistence type="predicted"/>
<protein>
    <recommendedName>
        <fullName>WD repeat-containing protein DDB_G0292056</fullName>
    </recommendedName>
</protein>
<reference key="1">
    <citation type="journal article" date="2005" name="Nature">
        <title>The genome of the social amoeba Dictyostelium discoideum.</title>
        <authorList>
            <person name="Eichinger L."/>
            <person name="Pachebat J.A."/>
            <person name="Gloeckner G."/>
            <person name="Rajandream M.A."/>
            <person name="Sucgang R."/>
            <person name="Berriman M."/>
            <person name="Song J."/>
            <person name="Olsen R."/>
            <person name="Szafranski K."/>
            <person name="Xu Q."/>
            <person name="Tunggal B."/>
            <person name="Kummerfeld S."/>
            <person name="Madera M."/>
            <person name="Konfortov B.A."/>
            <person name="Rivero F."/>
            <person name="Bankier A.T."/>
            <person name="Lehmann R."/>
            <person name="Hamlin N."/>
            <person name="Davies R."/>
            <person name="Gaudet P."/>
            <person name="Fey P."/>
            <person name="Pilcher K."/>
            <person name="Chen G."/>
            <person name="Saunders D."/>
            <person name="Sodergren E.J."/>
            <person name="Davis P."/>
            <person name="Kerhornou A."/>
            <person name="Nie X."/>
            <person name="Hall N."/>
            <person name="Anjard C."/>
            <person name="Hemphill L."/>
            <person name="Bason N."/>
            <person name="Farbrother P."/>
            <person name="Desany B."/>
            <person name="Just E."/>
            <person name="Morio T."/>
            <person name="Rost R."/>
            <person name="Churcher C.M."/>
            <person name="Cooper J."/>
            <person name="Haydock S."/>
            <person name="van Driessche N."/>
            <person name="Cronin A."/>
            <person name="Goodhead I."/>
            <person name="Muzny D.M."/>
            <person name="Mourier T."/>
            <person name="Pain A."/>
            <person name="Lu M."/>
            <person name="Harper D."/>
            <person name="Lindsay R."/>
            <person name="Hauser H."/>
            <person name="James K.D."/>
            <person name="Quiles M."/>
            <person name="Madan Babu M."/>
            <person name="Saito T."/>
            <person name="Buchrieser C."/>
            <person name="Wardroper A."/>
            <person name="Felder M."/>
            <person name="Thangavelu M."/>
            <person name="Johnson D."/>
            <person name="Knights A."/>
            <person name="Loulseged H."/>
            <person name="Mungall K.L."/>
            <person name="Oliver K."/>
            <person name="Price C."/>
            <person name="Quail M.A."/>
            <person name="Urushihara H."/>
            <person name="Hernandez J."/>
            <person name="Rabbinowitsch E."/>
            <person name="Steffen D."/>
            <person name="Sanders M."/>
            <person name="Ma J."/>
            <person name="Kohara Y."/>
            <person name="Sharp S."/>
            <person name="Simmonds M.N."/>
            <person name="Spiegler S."/>
            <person name="Tivey A."/>
            <person name="Sugano S."/>
            <person name="White B."/>
            <person name="Walker D."/>
            <person name="Woodward J.R."/>
            <person name="Winckler T."/>
            <person name="Tanaka Y."/>
            <person name="Shaulsky G."/>
            <person name="Schleicher M."/>
            <person name="Weinstock G.M."/>
            <person name="Rosenthal A."/>
            <person name="Cox E.C."/>
            <person name="Chisholm R.L."/>
            <person name="Gibbs R.A."/>
            <person name="Loomis W.F."/>
            <person name="Platzer M."/>
            <person name="Kay R.R."/>
            <person name="Williams J.G."/>
            <person name="Dear P.H."/>
            <person name="Noegel A.A."/>
            <person name="Barrell B.G."/>
            <person name="Kuspa A."/>
        </authorList>
    </citation>
    <scope>NUCLEOTIDE SEQUENCE [LARGE SCALE GENOMIC DNA]</scope>
    <source>
        <strain>AX4</strain>
    </source>
</reference>
<gene>
    <name type="ORF">DDB_G0292056</name>
</gene>
<organism>
    <name type="scientific">Dictyostelium discoideum</name>
    <name type="common">Social amoeba</name>
    <dbReference type="NCBI Taxonomy" id="44689"/>
    <lineage>
        <taxon>Eukaryota</taxon>
        <taxon>Amoebozoa</taxon>
        <taxon>Evosea</taxon>
        <taxon>Eumycetozoa</taxon>
        <taxon>Dictyostelia</taxon>
        <taxon>Dictyosteliales</taxon>
        <taxon>Dictyosteliaceae</taxon>
        <taxon>Dictyostelium</taxon>
    </lineage>
</organism>